<sequence>MTRTTRIDTQEATKHKDLPPVPSPLSLSSNPNPECLMESKSLGRKNFKKLSLDASPVKSTSGSLRSSDMMSIKEPTSLRQKRQRPPPILHLPTASSSATSTPTSNITGSSSASSIQFAQKSPGSGVIVSQTLSRPSSAGGIPSSGYSSLNVNQSNRNVDPDNVVSTDMILNQISNLDLTSMNHHRQHYQNSHHHLPTTNRKRQTVISSISPTKSSAASSPLEPQIQSLPASSQSPIATTSALKLNNKDLLTLKQLGSGNSGSVSKILHIPTQKTMAKKIIHIDSKSVIQTQIIRELRILHECHSPYIIEFYGACLNNNNTIVICMEYCNCGSLDKILPLCENKQFPTFVLKKLSFAILSGLTYLYTTHKIIHRDIKPNNVLMTHKGEFKLCDFGVSRELTNSLAMADTFVGTSMYMSPERIQGLDYGVKSDVWSTGLMLIELASGVPVWSEDDNNNDDDEDDEDDAYVRQGSIAAERNGQNSPSRSRKNKQKGNGYNSYNGPEGILDLLQRIVNEDAPTLTNKINPVTKLPYDKYLCQFIDLCLIKDDSVRKTPWQLLEDKEHFFKGVEEGVYDKEHKSWAKKIRKCKV</sequence>
<feature type="chain" id="PRO_0000413043" description="Serine/threonine-protein kinase STE7 homolog">
    <location>
        <begin position="1"/>
        <end position="589"/>
    </location>
</feature>
<feature type="domain" description="Protein kinase" evidence="2">
    <location>
        <begin position="249"/>
        <end position="565"/>
    </location>
</feature>
<feature type="region of interest" description="Disordered" evidence="4">
    <location>
        <begin position="1"/>
        <end position="162"/>
    </location>
</feature>
<feature type="region of interest" description="Disordered" evidence="4">
    <location>
        <begin position="185"/>
        <end position="232"/>
    </location>
</feature>
<feature type="region of interest" description="Disordered" evidence="4">
    <location>
        <begin position="473"/>
        <end position="499"/>
    </location>
</feature>
<feature type="compositionally biased region" description="Basic and acidic residues" evidence="4">
    <location>
        <begin position="1"/>
        <end position="18"/>
    </location>
</feature>
<feature type="compositionally biased region" description="Low complexity" evidence="4">
    <location>
        <begin position="24"/>
        <end position="33"/>
    </location>
</feature>
<feature type="compositionally biased region" description="Polar residues" evidence="4">
    <location>
        <begin position="57"/>
        <end position="69"/>
    </location>
</feature>
<feature type="compositionally biased region" description="Low complexity" evidence="4">
    <location>
        <begin position="92"/>
        <end position="121"/>
    </location>
</feature>
<feature type="compositionally biased region" description="Polar residues" evidence="4">
    <location>
        <begin position="127"/>
        <end position="136"/>
    </location>
</feature>
<feature type="compositionally biased region" description="Polar residues" evidence="4">
    <location>
        <begin position="144"/>
        <end position="162"/>
    </location>
</feature>
<feature type="compositionally biased region" description="Basic residues" evidence="4">
    <location>
        <begin position="185"/>
        <end position="203"/>
    </location>
</feature>
<feature type="compositionally biased region" description="Low complexity" evidence="4">
    <location>
        <begin position="206"/>
        <end position="220"/>
    </location>
</feature>
<feature type="active site" description="Proton acceptor" evidence="2 3">
    <location>
        <position position="374"/>
    </location>
</feature>
<feature type="binding site" evidence="2">
    <location>
        <begin position="255"/>
        <end position="263"/>
    </location>
    <ligand>
        <name>ATP</name>
        <dbReference type="ChEBI" id="CHEBI:30616"/>
    </ligand>
</feature>
<feature type="binding site" evidence="2">
    <location>
        <position position="278"/>
    </location>
    <ligand>
        <name>ATP</name>
        <dbReference type="ChEBI" id="CHEBI:30616"/>
    </ligand>
</feature>
<feature type="modified residue" description="Phosphoserine" evidence="1">
    <location>
        <position position="402"/>
    </location>
</feature>
<feature type="modified residue" description="Phosphothreonine" evidence="1">
    <location>
        <position position="408"/>
    </location>
</feature>
<feature type="sequence conflict" description="In Ref. 1; AAB59338." evidence="5" ref="1">
    <original>Q</original>
    <variation>T</variation>
    <location>
        <position position="83"/>
    </location>
</feature>
<feature type="sequence conflict" description="In Ref. 1; AAB59338." evidence="5" ref="1">
    <original>A</original>
    <variation>S</variation>
    <location>
        <position position="241"/>
    </location>
</feature>
<name>STE7_CANAW</name>
<keyword id="KW-0067">ATP-binding</keyword>
<keyword id="KW-0418">Kinase</keyword>
<keyword id="KW-0547">Nucleotide-binding</keyword>
<keyword id="KW-0597">Phosphoprotein</keyword>
<keyword id="KW-0723">Serine/threonine-protein kinase</keyword>
<keyword id="KW-0808">Transferase</keyword>
<evidence type="ECO:0000250" key="1"/>
<evidence type="ECO:0000255" key="2">
    <source>
        <dbReference type="PROSITE-ProRule" id="PRU00159"/>
    </source>
</evidence>
<evidence type="ECO:0000255" key="3">
    <source>
        <dbReference type="PROSITE-ProRule" id="PRU10027"/>
    </source>
</evidence>
<evidence type="ECO:0000256" key="4">
    <source>
        <dbReference type="SAM" id="MobiDB-lite"/>
    </source>
</evidence>
<evidence type="ECO:0000305" key="5"/>
<comment type="catalytic activity">
    <reaction>
        <text>L-seryl-[protein] + ATP = O-phospho-L-seryl-[protein] + ADP + H(+)</text>
        <dbReference type="Rhea" id="RHEA:17989"/>
        <dbReference type="Rhea" id="RHEA-COMP:9863"/>
        <dbReference type="Rhea" id="RHEA-COMP:11604"/>
        <dbReference type="ChEBI" id="CHEBI:15378"/>
        <dbReference type="ChEBI" id="CHEBI:29999"/>
        <dbReference type="ChEBI" id="CHEBI:30616"/>
        <dbReference type="ChEBI" id="CHEBI:83421"/>
        <dbReference type="ChEBI" id="CHEBI:456216"/>
        <dbReference type="EC" id="2.7.12.2"/>
    </reaction>
</comment>
<comment type="catalytic activity">
    <reaction>
        <text>L-threonyl-[protein] + ATP = O-phospho-L-threonyl-[protein] + ADP + H(+)</text>
        <dbReference type="Rhea" id="RHEA:46608"/>
        <dbReference type="Rhea" id="RHEA-COMP:11060"/>
        <dbReference type="Rhea" id="RHEA-COMP:11605"/>
        <dbReference type="ChEBI" id="CHEBI:15378"/>
        <dbReference type="ChEBI" id="CHEBI:30013"/>
        <dbReference type="ChEBI" id="CHEBI:30616"/>
        <dbReference type="ChEBI" id="CHEBI:61977"/>
        <dbReference type="ChEBI" id="CHEBI:456216"/>
        <dbReference type="EC" id="2.7.12.2"/>
    </reaction>
</comment>
<comment type="catalytic activity">
    <reaction>
        <text>L-tyrosyl-[protein] + ATP = O-phospho-L-tyrosyl-[protein] + ADP + H(+)</text>
        <dbReference type="Rhea" id="RHEA:10596"/>
        <dbReference type="Rhea" id="RHEA-COMP:10136"/>
        <dbReference type="Rhea" id="RHEA-COMP:20101"/>
        <dbReference type="ChEBI" id="CHEBI:15378"/>
        <dbReference type="ChEBI" id="CHEBI:30616"/>
        <dbReference type="ChEBI" id="CHEBI:46858"/>
        <dbReference type="ChEBI" id="CHEBI:61978"/>
        <dbReference type="ChEBI" id="CHEBI:456216"/>
        <dbReference type="EC" id="2.7.12.2"/>
    </reaction>
</comment>
<comment type="similarity">
    <text evidence="5">Belongs to the protein kinase superfamily. STE Ser/Thr protein kinase family. MAP kinase kinase subfamily.</text>
</comment>
<protein>
    <recommendedName>
        <fullName>Serine/threonine-protein kinase STE7 homolog</fullName>
        <ecNumber>2.7.12.2</ecNumber>
    </recommendedName>
</protein>
<proteinExistence type="inferred from homology"/>
<reference key="1">
    <citation type="journal article" date="1995" name="Mol. Gen. Genet.">
        <title>Constitutive activation of the Saccharomyces cerevisiae mating response pathway by a MAP kinase kinase from Candida albicans.</title>
        <authorList>
            <person name="Clark K.L."/>
            <person name="Feldmann P.J."/>
            <person name="Dignard D."/>
            <person name="Larocque R."/>
            <person name="Brown A.J."/>
            <person name="Lee M.G."/>
            <person name="Thomas D.Y."/>
            <person name="Whiteway M."/>
        </authorList>
    </citation>
    <scope>NUCLEOTIDE SEQUENCE [GENOMIC DNA]</scope>
    <source>
        <strain>WO-1</strain>
    </source>
</reference>
<reference key="2">
    <citation type="journal article" date="2009" name="Nature">
        <title>Evolution of pathogenicity and sexual reproduction in eight Candida genomes.</title>
        <authorList>
            <person name="Butler G."/>
            <person name="Rasmussen M.D."/>
            <person name="Lin M.F."/>
            <person name="Santos M.A.S."/>
            <person name="Sakthikumar S."/>
            <person name="Munro C.A."/>
            <person name="Rheinbay E."/>
            <person name="Grabherr M."/>
            <person name="Forche A."/>
            <person name="Reedy J.L."/>
            <person name="Agrafioti I."/>
            <person name="Arnaud M.B."/>
            <person name="Bates S."/>
            <person name="Brown A.J.P."/>
            <person name="Brunke S."/>
            <person name="Costanzo M.C."/>
            <person name="Fitzpatrick D.A."/>
            <person name="de Groot P.W.J."/>
            <person name="Harris D."/>
            <person name="Hoyer L.L."/>
            <person name="Hube B."/>
            <person name="Klis F.M."/>
            <person name="Kodira C."/>
            <person name="Lennard N."/>
            <person name="Logue M.E."/>
            <person name="Martin R."/>
            <person name="Neiman A.M."/>
            <person name="Nikolaou E."/>
            <person name="Quail M.A."/>
            <person name="Quinn J."/>
            <person name="Santos M.C."/>
            <person name="Schmitzberger F.F."/>
            <person name="Sherlock G."/>
            <person name="Shah P."/>
            <person name="Silverstein K.A.T."/>
            <person name="Skrzypek M.S."/>
            <person name="Soll D."/>
            <person name="Staggs R."/>
            <person name="Stansfield I."/>
            <person name="Stumpf M.P.H."/>
            <person name="Sudbery P.E."/>
            <person name="Srikantha T."/>
            <person name="Zeng Q."/>
            <person name="Berman J."/>
            <person name="Berriman M."/>
            <person name="Heitman J."/>
            <person name="Gow N.A.R."/>
            <person name="Lorenz M.C."/>
            <person name="Birren B.W."/>
            <person name="Kellis M."/>
            <person name="Cuomo C.A."/>
        </authorList>
    </citation>
    <scope>NUCLEOTIDE SEQUENCE [LARGE SCALE GENOMIC DNA]</scope>
    <source>
        <strain>WO-1</strain>
    </source>
</reference>
<gene>
    <name type="primary">HST7</name>
    <name type="synonym">STE7</name>
    <name type="ORF">CAWG_01727</name>
</gene>
<organism>
    <name type="scientific">Candida albicans (strain WO-1)</name>
    <name type="common">Yeast</name>
    <dbReference type="NCBI Taxonomy" id="294748"/>
    <lineage>
        <taxon>Eukaryota</taxon>
        <taxon>Fungi</taxon>
        <taxon>Dikarya</taxon>
        <taxon>Ascomycota</taxon>
        <taxon>Saccharomycotina</taxon>
        <taxon>Pichiomycetes</taxon>
        <taxon>Debaryomycetaceae</taxon>
        <taxon>Candida/Lodderomyces clade</taxon>
        <taxon>Candida</taxon>
    </lineage>
</organism>
<accession>C4YLK8</accession>
<accession>P46599</accession>
<accession>P78596</accession>
<dbReference type="EC" id="2.7.12.2"/>
<dbReference type="EMBL" id="L19195">
    <property type="protein sequence ID" value="AAB59338.1"/>
    <property type="molecule type" value="Genomic_DNA"/>
</dbReference>
<dbReference type="EMBL" id="CM000309">
    <property type="protein sequence ID" value="EEQ43489.1"/>
    <property type="molecule type" value="Genomic_DNA"/>
</dbReference>
<dbReference type="PIR" id="S60154">
    <property type="entry name" value="S60154"/>
</dbReference>
<dbReference type="PIR" id="S60159">
    <property type="entry name" value="S60159"/>
</dbReference>
<dbReference type="SMR" id="C4YLK8"/>
<dbReference type="PaxDb" id="5476-C4YLK8"/>
<dbReference type="VEuPathDB" id="FungiDB:CAWG_01727"/>
<dbReference type="HOGENOM" id="CLU_000288_63_23_1"/>
<dbReference type="OMA" id="SWAKKIR"/>
<dbReference type="OrthoDB" id="14099at766764"/>
<dbReference type="PHI-base" id="PHI:462"/>
<dbReference type="Proteomes" id="UP000001429">
    <property type="component" value="Chromosome R"/>
</dbReference>
<dbReference type="GO" id="GO:0005524">
    <property type="term" value="F:ATP binding"/>
    <property type="evidence" value="ECO:0007669"/>
    <property type="project" value="UniProtKB-KW"/>
</dbReference>
<dbReference type="GO" id="GO:0004708">
    <property type="term" value="F:MAP kinase kinase activity"/>
    <property type="evidence" value="ECO:0007669"/>
    <property type="project" value="UniProtKB-EC"/>
</dbReference>
<dbReference type="GO" id="GO:0106310">
    <property type="term" value="F:protein serine kinase activity"/>
    <property type="evidence" value="ECO:0007669"/>
    <property type="project" value="RHEA"/>
</dbReference>
<dbReference type="GO" id="GO:0004674">
    <property type="term" value="F:protein serine/threonine kinase activity"/>
    <property type="evidence" value="ECO:0007669"/>
    <property type="project" value="UniProtKB-KW"/>
</dbReference>
<dbReference type="GO" id="GO:0004713">
    <property type="term" value="F:protein tyrosine kinase activity"/>
    <property type="evidence" value="ECO:0007669"/>
    <property type="project" value="RHEA"/>
</dbReference>
<dbReference type="GO" id="GO:0030447">
    <property type="term" value="P:filamentous growth"/>
    <property type="evidence" value="ECO:0007669"/>
    <property type="project" value="UniProtKB-ARBA"/>
</dbReference>
<dbReference type="CDD" id="cd06620">
    <property type="entry name" value="PKc_Byr1_like"/>
    <property type="match status" value="1"/>
</dbReference>
<dbReference type="FunFam" id="1.10.510.10:FF:001756">
    <property type="entry name" value="Serine/threonine-protein kinase STE7 homolog"/>
    <property type="match status" value="1"/>
</dbReference>
<dbReference type="FunFam" id="3.30.200.20:FF:001022">
    <property type="entry name" value="Serine/threonine-protein kinase STE7 homolog"/>
    <property type="match status" value="1"/>
</dbReference>
<dbReference type="Gene3D" id="3.30.200.20">
    <property type="entry name" value="Phosphorylase Kinase, domain 1"/>
    <property type="match status" value="1"/>
</dbReference>
<dbReference type="Gene3D" id="1.10.510.10">
    <property type="entry name" value="Transferase(Phosphotransferase) domain 1"/>
    <property type="match status" value="1"/>
</dbReference>
<dbReference type="InterPro" id="IPR049613">
    <property type="entry name" value="Byr1-like_cat"/>
</dbReference>
<dbReference type="InterPro" id="IPR011009">
    <property type="entry name" value="Kinase-like_dom_sf"/>
</dbReference>
<dbReference type="InterPro" id="IPR050915">
    <property type="entry name" value="MAP_kinase_kinase"/>
</dbReference>
<dbReference type="InterPro" id="IPR000719">
    <property type="entry name" value="Prot_kinase_dom"/>
</dbReference>
<dbReference type="InterPro" id="IPR017441">
    <property type="entry name" value="Protein_kinase_ATP_BS"/>
</dbReference>
<dbReference type="InterPro" id="IPR008271">
    <property type="entry name" value="Ser/Thr_kinase_AS"/>
</dbReference>
<dbReference type="PANTHER" id="PTHR47448">
    <property type="entry name" value="DUAL SPECIFICITY MITOGEN-ACTIVATED PROTEIN KINASE KINASE DSOR1-LIKE PROTEIN"/>
    <property type="match status" value="1"/>
</dbReference>
<dbReference type="PANTHER" id="PTHR47448:SF1">
    <property type="entry name" value="SERINE_THREONINE-PROTEIN KINASE STE7 HOMOLOG"/>
    <property type="match status" value="1"/>
</dbReference>
<dbReference type="Pfam" id="PF00069">
    <property type="entry name" value="Pkinase"/>
    <property type="match status" value="1"/>
</dbReference>
<dbReference type="SMART" id="SM00220">
    <property type="entry name" value="S_TKc"/>
    <property type="match status" value="1"/>
</dbReference>
<dbReference type="SUPFAM" id="SSF56112">
    <property type="entry name" value="Protein kinase-like (PK-like)"/>
    <property type="match status" value="1"/>
</dbReference>
<dbReference type="PROSITE" id="PS00107">
    <property type="entry name" value="PROTEIN_KINASE_ATP"/>
    <property type="match status" value="1"/>
</dbReference>
<dbReference type="PROSITE" id="PS50011">
    <property type="entry name" value="PROTEIN_KINASE_DOM"/>
    <property type="match status" value="1"/>
</dbReference>
<dbReference type="PROSITE" id="PS00108">
    <property type="entry name" value="PROTEIN_KINASE_ST"/>
    <property type="match status" value="1"/>
</dbReference>